<evidence type="ECO:0000256" key="1">
    <source>
        <dbReference type="SAM" id="MobiDB-lite"/>
    </source>
</evidence>
<evidence type="ECO:0000269" key="2">
    <source>
    </source>
</evidence>
<evidence type="ECO:0000305" key="3"/>
<protein>
    <recommendedName>
        <fullName>Uncharacterized protein B-251</fullName>
    </recommendedName>
</protein>
<comment type="function">
    <text evidence="2">This protein may be involved in virus assembly. Essential for virus function.</text>
</comment>
<name>B251_SSV1</name>
<keyword id="KW-0067">ATP-binding</keyword>
<keyword id="KW-0547">Nucleotide-binding</keyword>
<keyword id="KW-1185">Reference proteome</keyword>
<sequence length="251" mass="29532">MVRNMKMKKSNEWLWLGTKIINAHKTNGFESAIIFGKQGTGKTTYALKVAKEVYQRLGHEPDKAWELALDSLFFELKDALRIMKIFRQNDRTIPIIIFDDAGIWLQKYLWYKEEMIKFYRIYNIIRNIVSGVIFTTPSPNDIAFYVREKGWKLIMITRNGRQPDGTPKAVAKIAVNKITIIKGKITNKMKWRTVDDYTVKLPDWVYKEYVERRKVYEEKLLEELDEVLDSDNKTENPSNPSLLTKIDDVTR</sequence>
<proteinExistence type="predicted"/>
<accession>P20202</accession>
<organism>
    <name type="scientific">Sulfolobus spindle-shape virus 1</name>
    <name type="common">SSV1</name>
    <dbReference type="NCBI Taxonomy" id="244589"/>
    <lineage>
        <taxon>Viruses</taxon>
        <taxon>Viruses incertae sedis</taxon>
        <taxon>Fuselloviridae</taxon>
        <taxon>Alphafusellovirus</taxon>
    </lineage>
</organism>
<gene>
    <name type="ORF">b251</name>
</gene>
<organismHost>
    <name type="scientific">Saccharolobus solfataricus</name>
    <name type="common">Sulfolobus solfataricus</name>
    <dbReference type="NCBI Taxonomy" id="2287"/>
</organismHost>
<feature type="chain" id="PRO_0000114325" description="Uncharacterized protein B-251">
    <location>
        <begin position="1"/>
        <end position="251"/>
    </location>
</feature>
<feature type="region of interest" description="Disordered" evidence="1">
    <location>
        <begin position="230"/>
        <end position="251"/>
    </location>
</feature>
<feature type="binding site" evidence="3">
    <location>
        <begin position="36"/>
        <end position="43"/>
    </location>
    <ligand>
        <name>ATP</name>
        <dbReference type="ChEBI" id="CHEBI:30616"/>
    </ligand>
</feature>
<dbReference type="EMBL" id="X07234">
    <property type="protein sequence ID" value="CAA30210.1"/>
    <property type="molecule type" value="Genomic_DNA"/>
</dbReference>
<dbReference type="PIR" id="S03211">
    <property type="entry name" value="S03211"/>
</dbReference>
<dbReference type="RefSeq" id="NP_039777.1">
    <property type="nucleotide sequence ID" value="NC_001338.1"/>
</dbReference>
<dbReference type="KEGG" id="vg:2559641"/>
<dbReference type="OrthoDB" id="7188at10239"/>
<dbReference type="Proteomes" id="UP000000854">
    <property type="component" value="Genome"/>
</dbReference>
<dbReference type="GO" id="GO:0005524">
    <property type="term" value="F:ATP binding"/>
    <property type="evidence" value="ECO:0007669"/>
    <property type="project" value="UniProtKB-KW"/>
</dbReference>
<dbReference type="Gene3D" id="3.40.50.300">
    <property type="entry name" value="P-loop containing nucleotide triphosphate hydrolases"/>
    <property type="match status" value="1"/>
</dbReference>
<dbReference type="InterPro" id="IPR027417">
    <property type="entry name" value="P-loop_NTPase"/>
</dbReference>
<dbReference type="SUPFAM" id="SSF52540">
    <property type="entry name" value="P-loop containing nucleoside triphosphate hydrolases"/>
    <property type="match status" value="1"/>
</dbReference>
<reference key="1">
    <citation type="journal article" date="1991" name="Virology">
        <title>Complete nucleotide sequence of the virus SSV1 of the archaebacterium Sulfolobus shibatae.</title>
        <authorList>
            <person name="Palm P."/>
            <person name="Schleper C."/>
            <person name="Grampp B."/>
            <person name="Yeats S."/>
            <person name="McWilliam P."/>
            <person name="Reiter W.-D."/>
            <person name="Zillig W."/>
        </authorList>
    </citation>
    <scope>NUCLEOTIDE SEQUENCE [GENOMIC DNA]</scope>
</reference>
<reference key="2">
    <citation type="journal article" date="1992" name="Nucleic Acids Res.">
        <title>Archaebacterial virus SSV1 encodes a putative DnaA-like protein.</title>
        <authorList>
            <person name="Koonin E.V."/>
        </authorList>
    </citation>
    <scope>SIMILARITY TO DNAA</scope>
</reference>
<reference key="3">
    <citation type="journal article" date="1999" name="Genetics">
        <title>Genetic requirements for the function of the archaeal virus SSV1 in Sulfolobus solfataricus: construction and testing of viral shuttle vectors.</title>
        <authorList>
            <person name="Stedman K.M."/>
            <person name="Schleper C."/>
            <person name="Rumpf E."/>
            <person name="Zillig W."/>
        </authorList>
    </citation>
    <scope>FUNCTION</scope>
</reference>